<proteinExistence type="inferred from homology"/>
<name>DPO4_SALTI</name>
<sequence length="351" mass="39658">MRKIIHVDMDCFFAAVEMRDNPALRDIPIAIGGSRERRGVISTANYPARQFGVRSAMPTAMALKLCPHLTLLPGRFDAYKEASRHVRDIFSRYTSLIEPLSLDEAWLDVTDSPHCYGSATLIAREIRQTIFNELQLTASAGVAPVKFLAKIASDLNKPNGQYVITPADVPDFLKTLPLAKIPGVGKVSAAKLENMGLRTCGDIQQCDLAMLLKRFGKFGRVLWERSQGIDERDVNSERLRKSVGVERTLAEDIHEWSDCEAIIEHLYPELERRLAIVKPDLLIARQGVKLKFNDFQQTTQEHVWPQLNKEDLITTARKTWDERRGERGVRLVGLHVTLLDPQLERQLVLGL</sequence>
<organism>
    <name type="scientific">Salmonella typhi</name>
    <dbReference type="NCBI Taxonomy" id="90370"/>
    <lineage>
        <taxon>Bacteria</taxon>
        <taxon>Pseudomonadati</taxon>
        <taxon>Pseudomonadota</taxon>
        <taxon>Gammaproteobacteria</taxon>
        <taxon>Enterobacterales</taxon>
        <taxon>Enterobacteriaceae</taxon>
        <taxon>Salmonella</taxon>
    </lineage>
</organism>
<reference key="1">
    <citation type="journal article" date="2001" name="Nature">
        <title>Complete genome sequence of a multiple drug resistant Salmonella enterica serovar Typhi CT18.</title>
        <authorList>
            <person name="Parkhill J."/>
            <person name="Dougan G."/>
            <person name="James K.D."/>
            <person name="Thomson N.R."/>
            <person name="Pickard D."/>
            <person name="Wain J."/>
            <person name="Churcher C.M."/>
            <person name="Mungall K.L."/>
            <person name="Bentley S.D."/>
            <person name="Holden M.T.G."/>
            <person name="Sebaihia M."/>
            <person name="Baker S."/>
            <person name="Basham D."/>
            <person name="Brooks K."/>
            <person name="Chillingworth T."/>
            <person name="Connerton P."/>
            <person name="Cronin A."/>
            <person name="Davis P."/>
            <person name="Davies R.M."/>
            <person name="Dowd L."/>
            <person name="White N."/>
            <person name="Farrar J."/>
            <person name="Feltwell T."/>
            <person name="Hamlin N."/>
            <person name="Haque A."/>
            <person name="Hien T.T."/>
            <person name="Holroyd S."/>
            <person name="Jagels K."/>
            <person name="Krogh A."/>
            <person name="Larsen T.S."/>
            <person name="Leather S."/>
            <person name="Moule S."/>
            <person name="O'Gaora P."/>
            <person name="Parry C."/>
            <person name="Quail M.A."/>
            <person name="Rutherford K.M."/>
            <person name="Simmonds M."/>
            <person name="Skelton J."/>
            <person name="Stevens K."/>
            <person name="Whitehead S."/>
            <person name="Barrell B.G."/>
        </authorList>
    </citation>
    <scope>NUCLEOTIDE SEQUENCE [LARGE SCALE GENOMIC DNA]</scope>
    <source>
        <strain>CT18</strain>
    </source>
</reference>
<reference key="2">
    <citation type="journal article" date="2003" name="J. Bacteriol.">
        <title>Comparative genomics of Salmonella enterica serovar Typhi strains Ty2 and CT18.</title>
        <authorList>
            <person name="Deng W."/>
            <person name="Liou S.-R."/>
            <person name="Plunkett G. III"/>
            <person name="Mayhew G.F."/>
            <person name="Rose D.J."/>
            <person name="Burland V."/>
            <person name="Kodoyianni V."/>
            <person name="Schwartz D.C."/>
            <person name="Blattner F.R."/>
        </authorList>
    </citation>
    <scope>NUCLEOTIDE SEQUENCE [LARGE SCALE GENOMIC DNA]</scope>
    <source>
        <strain>ATCC 700931 / Ty2</strain>
    </source>
</reference>
<evidence type="ECO:0000255" key="1">
    <source>
        <dbReference type="HAMAP-Rule" id="MF_01113"/>
    </source>
</evidence>
<feature type="chain" id="PRO_0000173942" description="DNA polymerase IV">
    <location>
        <begin position="1"/>
        <end position="351"/>
    </location>
</feature>
<feature type="domain" description="UmuC" evidence="1">
    <location>
        <begin position="4"/>
        <end position="185"/>
    </location>
</feature>
<feature type="active site" evidence="1">
    <location>
        <position position="104"/>
    </location>
</feature>
<feature type="binding site" evidence="1">
    <location>
        <position position="8"/>
    </location>
    <ligand>
        <name>Mg(2+)</name>
        <dbReference type="ChEBI" id="CHEBI:18420"/>
    </ligand>
</feature>
<feature type="binding site" evidence="1">
    <location>
        <position position="103"/>
    </location>
    <ligand>
        <name>Mg(2+)</name>
        <dbReference type="ChEBI" id="CHEBI:18420"/>
    </ligand>
</feature>
<feature type="site" description="Substrate discrimination" evidence="1">
    <location>
        <position position="13"/>
    </location>
</feature>
<accession>P63990</accession>
<accession>Q8XET9</accession>
<comment type="function">
    <text evidence="1">Poorly processive, error-prone DNA polymerase involved in untargeted mutagenesis. Copies undamaged DNA at stalled replication forks, which arise in vivo from mismatched or misaligned primer ends. These misaligned primers can be extended by PolIV. Exhibits no 3'-5' exonuclease (proofreading) activity. May be involved in translesional synthesis, in conjunction with the beta clamp from PolIII.</text>
</comment>
<comment type="catalytic activity">
    <reaction evidence="1">
        <text>DNA(n) + a 2'-deoxyribonucleoside 5'-triphosphate = DNA(n+1) + diphosphate</text>
        <dbReference type="Rhea" id="RHEA:22508"/>
        <dbReference type="Rhea" id="RHEA-COMP:17339"/>
        <dbReference type="Rhea" id="RHEA-COMP:17340"/>
        <dbReference type="ChEBI" id="CHEBI:33019"/>
        <dbReference type="ChEBI" id="CHEBI:61560"/>
        <dbReference type="ChEBI" id="CHEBI:173112"/>
        <dbReference type="EC" id="2.7.7.7"/>
    </reaction>
</comment>
<comment type="cofactor">
    <cofactor evidence="1">
        <name>Mg(2+)</name>
        <dbReference type="ChEBI" id="CHEBI:18420"/>
    </cofactor>
    <text evidence="1">Binds 2 magnesium ions per subunit.</text>
</comment>
<comment type="subunit">
    <text evidence="1">Monomer.</text>
</comment>
<comment type="subcellular location">
    <subcellularLocation>
        <location evidence="1">Cytoplasm</location>
    </subcellularLocation>
</comment>
<comment type="similarity">
    <text evidence="1">Belongs to the DNA polymerase type-Y family.</text>
</comment>
<keyword id="KW-0963">Cytoplasm</keyword>
<keyword id="KW-0227">DNA damage</keyword>
<keyword id="KW-0234">DNA repair</keyword>
<keyword id="KW-0235">DNA replication</keyword>
<keyword id="KW-0238">DNA-binding</keyword>
<keyword id="KW-0239">DNA-directed DNA polymerase</keyword>
<keyword id="KW-0460">Magnesium</keyword>
<keyword id="KW-0479">Metal-binding</keyword>
<keyword id="KW-0515">Mutator protein</keyword>
<keyword id="KW-0548">Nucleotidyltransferase</keyword>
<keyword id="KW-0808">Transferase</keyword>
<dbReference type="EC" id="2.7.7.7" evidence="1"/>
<dbReference type="EMBL" id="AL513382">
    <property type="protein sequence ID" value="CAD08783.1"/>
    <property type="molecule type" value="Genomic_DNA"/>
</dbReference>
<dbReference type="EMBL" id="AE014613">
    <property type="protein sequence ID" value="AAO70121.1"/>
    <property type="molecule type" value="Genomic_DNA"/>
</dbReference>
<dbReference type="RefSeq" id="NP_454925.1">
    <property type="nucleotide sequence ID" value="NC_003198.1"/>
</dbReference>
<dbReference type="RefSeq" id="WP_001226198.1">
    <property type="nucleotide sequence ID" value="NZ_WSUR01000017.1"/>
</dbReference>
<dbReference type="SMR" id="P63990"/>
<dbReference type="STRING" id="220341.gene:17584387"/>
<dbReference type="KEGG" id="stt:t2537"/>
<dbReference type="KEGG" id="sty:STY0358"/>
<dbReference type="PATRIC" id="fig|220341.7.peg.352"/>
<dbReference type="eggNOG" id="COG0389">
    <property type="taxonomic scope" value="Bacteria"/>
</dbReference>
<dbReference type="HOGENOM" id="CLU_012348_1_2_6"/>
<dbReference type="OMA" id="TRCKPDG"/>
<dbReference type="OrthoDB" id="9808813at2"/>
<dbReference type="Proteomes" id="UP000000541">
    <property type="component" value="Chromosome"/>
</dbReference>
<dbReference type="Proteomes" id="UP000002670">
    <property type="component" value="Chromosome"/>
</dbReference>
<dbReference type="GO" id="GO:0005829">
    <property type="term" value="C:cytosol"/>
    <property type="evidence" value="ECO:0007669"/>
    <property type="project" value="TreeGrafter"/>
</dbReference>
<dbReference type="GO" id="GO:0003684">
    <property type="term" value="F:damaged DNA binding"/>
    <property type="evidence" value="ECO:0007669"/>
    <property type="project" value="InterPro"/>
</dbReference>
<dbReference type="GO" id="GO:0003887">
    <property type="term" value="F:DNA-directed DNA polymerase activity"/>
    <property type="evidence" value="ECO:0007669"/>
    <property type="project" value="UniProtKB-UniRule"/>
</dbReference>
<dbReference type="GO" id="GO:0000287">
    <property type="term" value="F:magnesium ion binding"/>
    <property type="evidence" value="ECO:0007669"/>
    <property type="project" value="UniProtKB-UniRule"/>
</dbReference>
<dbReference type="GO" id="GO:0006261">
    <property type="term" value="P:DNA-templated DNA replication"/>
    <property type="evidence" value="ECO:0007669"/>
    <property type="project" value="UniProtKB-UniRule"/>
</dbReference>
<dbReference type="GO" id="GO:0042276">
    <property type="term" value="P:error-prone translesion synthesis"/>
    <property type="evidence" value="ECO:0007669"/>
    <property type="project" value="TreeGrafter"/>
</dbReference>
<dbReference type="GO" id="GO:0009432">
    <property type="term" value="P:SOS response"/>
    <property type="evidence" value="ECO:0007669"/>
    <property type="project" value="TreeGrafter"/>
</dbReference>
<dbReference type="CDD" id="cd03586">
    <property type="entry name" value="PolY_Pol_IV_kappa"/>
    <property type="match status" value="1"/>
</dbReference>
<dbReference type="FunFam" id="1.10.150.20:FF:000019">
    <property type="entry name" value="DNA polymerase IV"/>
    <property type="match status" value="1"/>
</dbReference>
<dbReference type="FunFam" id="3.30.1490.100:FF:000002">
    <property type="entry name" value="DNA polymerase IV"/>
    <property type="match status" value="1"/>
</dbReference>
<dbReference type="FunFam" id="3.30.70.270:FF:000002">
    <property type="entry name" value="DNA polymerase IV"/>
    <property type="match status" value="1"/>
</dbReference>
<dbReference type="FunFam" id="3.40.1170.60:FF:000001">
    <property type="entry name" value="DNA polymerase IV"/>
    <property type="match status" value="1"/>
</dbReference>
<dbReference type="Gene3D" id="3.30.70.270">
    <property type="match status" value="1"/>
</dbReference>
<dbReference type="Gene3D" id="3.40.1170.60">
    <property type="match status" value="1"/>
</dbReference>
<dbReference type="Gene3D" id="1.10.150.20">
    <property type="entry name" value="5' to 3' exonuclease, C-terminal subdomain"/>
    <property type="match status" value="1"/>
</dbReference>
<dbReference type="Gene3D" id="3.30.1490.100">
    <property type="entry name" value="DNA polymerase, Y-family, little finger domain"/>
    <property type="match status" value="1"/>
</dbReference>
<dbReference type="HAMAP" id="MF_01113">
    <property type="entry name" value="DNApol_IV"/>
    <property type="match status" value="1"/>
</dbReference>
<dbReference type="InterPro" id="IPR043502">
    <property type="entry name" value="DNA/RNA_pol_sf"/>
</dbReference>
<dbReference type="InterPro" id="IPR036775">
    <property type="entry name" value="DNA_pol_Y-fam_lit_finger_sf"/>
</dbReference>
<dbReference type="InterPro" id="IPR017961">
    <property type="entry name" value="DNA_pol_Y-fam_little_finger"/>
</dbReference>
<dbReference type="InterPro" id="IPR050116">
    <property type="entry name" value="DNA_polymerase-Y"/>
</dbReference>
<dbReference type="InterPro" id="IPR022880">
    <property type="entry name" value="DNApol_IV"/>
</dbReference>
<dbReference type="InterPro" id="IPR053848">
    <property type="entry name" value="IMS_HHH_1"/>
</dbReference>
<dbReference type="InterPro" id="IPR043128">
    <property type="entry name" value="Rev_trsase/Diguanyl_cyclase"/>
</dbReference>
<dbReference type="InterPro" id="IPR001126">
    <property type="entry name" value="UmuC"/>
</dbReference>
<dbReference type="NCBIfam" id="NF002677">
    <property type="entry name" value="PRK02406.1"/>
    <property type="match status" value="1"/>
</dbReference>
<dbReference type="PANTHER" id="PTHR11076:SF33">
    <property type="entry name" value="DNA POLYMERASE KAPPA"/>
    <property type="match status" value="1"/>
</dbReference>
<dbReference type="PANTHER" id="PTHR11076">
    <property type="entry name" value="DNA REPAIR POLYMERASE UMUC / TRANSFERASE FAMILY MEMBER"/>
    <property type="match status" value="1"/>
</dbReference>
<dbReference type="Pfam" id="PF00817">
    <property type="entry name" value="IMS"/>
    <property type="match status" value="1"/>
</dbReference>
<dbReference type="Pfam" id="PF11799">
    <property type="entry name" value="IMS_C"/>
    <property type="match status" value="1"/>
</dbReference>
<dbReference type="Pfam" id="PF21999">
    <property type="entry name" value="IMS_HHH_1"/>
    <property type="match status" value="1"/>
</dbReference>
<dbReference type="SUPFAM" id="SSF56672">
    <property type="entry name" value="DNA/RNA polymerases"/>
    <property type="match status" value="1"/>
</dbReference>
<dbReference type="SUPFAM" id="SSF100879">
    <property type="entry name" value="Lesion bypass DNA polymerase (Y-family), little finger domain"/>
    <property type="match status" value="1"/>
</dbReference>
<dbReference type="PROSITE" id="PS50173">
    <property type="entry name" value="UMUC"/>
    <property type="match status" value="1"/>
</dbReference>
<protein>
    <recommendedName>
        <fullName evidence="1">DNA polymerase IV</fullName>
        <shortName evidence="1">Pol IV</shortName>
        <ecNumber evidence="1">2.7.7.7</ecNumber>
    </recommendedName>
</protein>
<gene>
    <name evidence="1" type="primary">dinB</name>
    <name type="synonym">dinP</name>
    <name type="ordered locus">STY0358</name>
    <name type="ordered locus">t2537</name>
</gene>